<evidence type="ECO:0000250" key="1">
    <source>
        <dbReference type="UniProtKB" id="Q5XIQ3"/>
    </source>
</evidence>
<evidence type="ECO:0000250" key="2">
    <source>
        <dbReference type="UniProtKB" id="Q7LFL8"/>
    </source>
</evidence>
<evidence type="ECO:0000255" key="3"/>
<evidence type="ECO:0000255" key="4">
    <source>
        <dbReference type="PROSITE-ProRule" id="PRU00509"/>
    </source>
</evidence>
<evidence type="ECO:0000256" key="5">
    <source>
        <dbReference type="SAM" id="MobiDB-lite"/>
    </source>
</evidence>
<organism>
    <name type="scientific">Pongo abelii</name>
    <name type="common">Sumatran orangutan</name>
    <name type="synonym">Pongo pygmaeus abelii</name>
    <dbReference type="NCBI Taxonomy" id="9601"/>
    <lineage>
        <taxon>Eukaryota</taxon>
        <taxon>Metazoa</taxon>
        <taxon>Chordata</taxon>
        <taxon>Craniata</taxon>
        <taxon>Vertebrata</taxon>
        <taxon>Euteleostomi</taxon>
        <taxon>Mammalia</taxon>
        <taxon>Eutheria</taxon>
        <taxon>Euarchontoglires</taxon>
        <taxon>Primates</taxon>
        <taxon>Haplorrhini</taxon>
        <taxon>Catarrhini</taxon>
        <taxon>Hominidae</taxon>
        <taxon>Pongo</taxon>
    </lineage>
</organism>
<sequence>MSSLGGGSQDAGGSSSSSTNGSGGSGSSGPKAGAADKSAVVAAATPASVADDTPPPERRNKSGIISEPLNKSLRRSRPLSHYSSFGSSGGSGGGSMMGGESADKATAAAAAASLLANGHDLAAAMAVDKSNPTSKHKSGAVASLLSKAERATELAAEGQLTLQQFAQSTEMLKRVVQEHLPLMSEAGAGLPDMEAVAGAEALNGQSDFPYLGAFPINPGLFIMTPAGVFLAESALHMAGLAEYPMQGELASAISSGKKKRKRCGMCAPCRRRINCEQCSSCRNRKTGHQICKFRKCEELKKKPSAALEKVMLPTGAAFRWFQ</sequence>
<proteinExistence type="evidence at transcript level"/>
<feature type="chain" id="PRO_0000317550" description="CXXC-type zinc finger protein 5">
    <location>
        <begin position="1"/>
        <end position="322"/>
    </location>
</feature>
<feature type="zinc finger region" description="CXXC-type" evidence="4">
    <location>
        <begin position="256"/>
        <end position="297"/>
    </location>
</feature>
<feature type="region of interest" description="Disordered" evidence="5">
    <location>
        <begin position="1"/>
        <end position="100"/>
    </location>
</feature>
<feature type="short sequence motif" description="Nuclear localization signal" evidence="3">
    <location>
        <begin position="257"/>
        <end position="262"/>
    </location>
</feature>
<feature type="compositionally biased region" description="Gly residues" evidence="5">
    <location>
        <begin position="1"/>
        <end position="10"/>
    </location>
</feature>
<feature type="compositionally biased region" description="Low complexity" evidence="5">
    <location>
        <begin position="11"/>
        <end position="20"/>
    </location>
</feature>
<feature type="compositionally biased region" description="Low complexity" evidence="5">
    <location>
        <begin position="28"/>
        <end position="52"/>
    </location>
</feature>
<feature type="compositionally biased region" description="Gly residues" evidence="5">
    <location>
        <begin position="87"/>
        <end position="97"/>
    </location>
</feature>
<feature type="binding site" evidence="4">
    <location>
        <position position="263"/>
    </location>
    <ligand>
        <name>Zn(2+)</name>
        <dbReference type="ChEBI" id="CHEBI:29105"/>
        <label>1</label>
    </ligand>
</feature>
<feature type="binding site" evidence="4">
    <location>
        <position position="266"/>
    </location>
    <ligand>
        <name>Zn(2+)</name>
        <dbReference type="ChEBI" id="CHEBI:29105"/>
        <label>1</label>
    </ligand>
</feature>
<feature type="binding site" evidence="4">
    <location>
        <position position="269"/>
    </location>
    <ligand>
        <name>Zn(2+)</name>
        <dbReference type="ChEBI" id="CHEBI:29105"/>
        <label>1</label>
    </ligand>
</feature>
<feature type="binding site" evidence="4">
    <location>
        <position position="275"/>
    </location>
    <ligand>
        <name>Zn(2+)</name>
        <dbReference type="ChEBI" id="CHEBI:29105"/>
        <label>2</label>
    </ligand>
</feature>
<feature type="binding site" evidence="4">
    <location>
        <position position="278"/>
    </location>
    <ligand>
        <name>Zn(2+)</name>
        <dbReference type="ChEBI" id="CHEBI:29105"/>
        <label>2</label>
    </ligand>
</feature>
<feature type="binding site" evidence="4">
    <location>
        <position position="281"/>
    </location>
    <ligand>
        <name>Zn(2+)</name>
        <dbReference type="ChEBI" id="CHEBI:29105"/>
        <label>2</label>
    </ligand>
</feature>
<feature type="binding site" evidence="4">
    <location>
        <position position="291"/>
    </location>
    <ligand>
        <name>Zn(2+)</name>
        <dbReference type="ChEBI" id="CHEBI:29105"/>
        <label>2</label>
    </ligand>
</feature>
<feature type="binding site" evidence="4">
    <location>
        <position position="296"/>
    </location>
    <ligand>
        <name>Zn(2+)</name>
        <dbReference type="ChEBI" id="CHEBI:29105"/>
        <label>1</label>
    </ligand>
</feature>
<feature type="modified residue" description="Phosphothreonine" evidence="2">
    <location>
        <position position="53"/>
    </location>
</feature>
<accession>Q5R7N4</accession>
<name>CXXC5_PONAB</name>
<keyword id="KW-0963">Cytoplasm</keyword>
<keyword id="KW-0238">DNA-binding</keyword>
<keyword id="KW-0479">Metal-binding</keyword>
<keyword id="KW-0539">Nucleus</keyword>
<keyword id="KW-0597">Phosphoprotein</keyword>
<keyword id="KW-1185">Reference proteome</keyword>
<keyword id="KW-0862">Zinc</keyword>
<keyword id="KW-0863">Zinc-finger</keyword>
<protein>
    <recommendedName>
        <fullName>CXXC-type zinc finger protein 5</fullName>
    </recommendedName>
</protein>
<gene>
    <name type="primary">CXXC5</name>
</gene>
<reference key="1">
    <citation type="submission" date="2004-11" db="EMBL/GenBank/DDBJ databases">
        <authorList>
            <consortium name="The German cDNA consortium"/>
        </authorList>
    </citation>
    <scope>NUCLEOTIDE SEQUENCE [LARGE SCALE MRNA]</scope>
    <source>
        <tissue>Kidney</tissue>
    </source>
</reference>
<comment type="function">
    <text evidence="1 2">May indirectly participate in activation of the NF-kappa-B and MAPK pathways. Acts as a mediator of BMP4-mediated modulation of canonical Wnt signaling activity in neural stem cells. Required for DNA damage-induced ATM phosphorylation, p53 activation and cell cycle arrest. Involved in myelopoiesis (By similarity). Binds to the oxygen responsive element of COX4I2 and represses its transcription under hypoxia conditions (4% oxygen), as well as normoxia conditions (20% oxygen). May repress COX4I2 transactivation induced by CHCHD2 and RBPJ (By similarity). Binds preferentially to DNA containing cytidine-phosphate-guanosine (CpG) dinucleotides over CpH (H=A, T, and C), hemimethylated-CpG and hemimethylated-hydroxymethyl-CpG (By similarity).</text>
</comment>
<comment type="subunit">
    <text evidence="1 2">Interacts with DVL1 (By similarity). Interacts with RBPJ (By similarity).</text>
</comment>
<comment type="subcellular location">
    <subcellularLocation>
        <location evidence="1">Nucleus</location>
    </subcellularLocation>
    <subcellularLocation>
        <location evidence="1">Cytoplasm</location>
    </subcellularLocation>
    <text evidence="1">Colocalizes with DVL1 in large bodies localized just outside the nuclear membrane.</text>
</comment>
<comment type="domain">
    <text evidence="2">The CXXC zinc finger mediates binding to CpG-DNA.</text>
</comment>
<dbReference type="EMBL" id="CR860080">
    <property type="protein sequence ID" value="CAH92226.1"/>
    <property type="molecule type" value="mRNA"/>
</dbReference>
<dbReference type="RefSeq" id="NP_001126301.1">
    <property type="nucleotide sequence ID" value="NM_001132829.1"/>
</dbReference>
<dbReference type="RefSeq" id="XP_024102456.1">
    <property type="nucleotide sequence ID" value="XM_024246688.3"/>
</dbReference>
<dbReference type="RefSeq" id="XP_054411076.1">
    <property type="nucleotide sequence ID" value="XM_054555101.2"/>
</dbReference>
<dbReference type="RefSeq" id="XP_054411077.1">
    <property type="nucleotide sequence ID" value="XM_054555102.2"/>
</dbReference>
<dbReference type="RefSeq" id="XP_054411078.1">
    <property type="nucleotide sequence ID" value="XM_054555103.2"/>
</dbReference>
<dbReference type="RefSeq" id="XP_054411079.1">
    <property type="nucleotide sequence ID" value="XM_054555104.2"/>
</dbReference>
<dbReference type="RefSeq" id="XP_054411080.1">
    <property type="nucleotide sequence ID" value="XM_054555105.1"/>
</dbReference>
<dbReference type="RefSeq" id="XP_054411081.1">
    <property type="nucleotide sequence ID" value="XM_054555106.2"/>
</dbReference>
<dbReference type="RefSeq" id="XP_054411082.1">
    <property type="nucleotide sequence ID" value="XM_054555107.2"/>
</dbReference>
<dbReference type="RefSeq" id="XP_063579963.1">
    <property type="nucleotide sequence ID" value="XM_063723893.1"/>
</dbReference>
<dbReference type="SMR" id="Q5R7N4"/>
<dbReference type="FunCoup" id="Q5R7N4">
    <property type="interactions" value="1715"/>
</dbReference>
<dbReference type="STRING" id="9601.ENSPPYP00000017717"/>
<dbReference type="Ensembl" id="ENSPPYT00000018430.3">
    <property type="protein sequence ID" value="ENSPPYP00000017717.2"/>
    <property type="gene ID" value="ENSPPYG00000015845.3"/>
</dbReference>
<dbReference type="GeneID" id="100173280"/>
<dbReference type="KEGG" id="pon:100173280"/>
<dbReference type="CTD" id="51523"/>
<dbReference type="eggNOG" id="ENOG502QT2M">
    <property type="taxonomic scope" value="Eukaryota"/>
</dbReference>
<dbReference type="GeneTree" id="ENSGT00940000154108"/>
<dbReference type="HOGENOM" id="CLU_074593_0_0_1"/>
<dbReference type="InParanoid" id="Q5R7N4"/>
<dbReference type="OMA" id="ANGHDPP"/>
<dbReference type="OrthoDB" id="8854879at2759"/>
<dbReference type="TreeFam" id="TF326617"/>
<dbReference type="Proteomes" id="UP000001595">
    <property type="component" value="Chromosome 5"/>
</dbReference>
<dbReference type="GO" id="GO:0005829">
    <property type="term" value="C:cytosol"/>
    <property type="evidence" value="ECO:0007669"/>
    <property type="project" value="Ensembl"/>
</dbReference>
<dbReference type="GO" id="GO:0005654">
    <property type="term" value="C:nucleoplasm"/>
    <property type="evidence" value="ECO:0007669"/>
    <property type="project" value="Ensembl"/>
</dbReference>
<dbReference type="GO" id="GO:0140297">
    <property type="term" value="F:DNA-binding transcription factor binding"/>
    <property type="evidence" value="ECO:0000250"/>
    <property type="project" value="UniProtKB"/>
</dbReference>
<dbReference type="GO" id="GO:0008327">
    <property type="term" value="F:methyl-CpG binding"/>
    <property type="evidence" value="ECO:0000250"/>
    <property type="project" value="UniProtKB"/>
</dbReference>
<dbReference type="GO" id="GO:0043565">
    <property type="term" value="F:sequence-specific DNA binding"/>
    <property type="evidence" value="ECO:0000250"/>
    <property type="project" value="UniProtKB"/>
</dbReference>
<dbReference type="GO" id="GO:0008270">
    <property type="term" value="F:zinc ion binding"/>
    <property type="evidence" value="ECO:0000250"/>
    <property type="project" value="UniProtKB"/>
</dbReference>
<dbReference type="GO" id="GO:0000122">
    <property type="term" value="P:negative regulation of transcription by RNA polymerase II"/>
    <property type="evidence" value="ECO:0000250"/>
    <property type="project" value="UniProtKB"/>
</dbReference>
<dbReference type="GO" id="GO:0043467">
    <property type="term" value="P:regulation of generation of precursor metabolites and energy"/>
    <property type="evidence" value="ECO:0007669"/>
    <property type="project" value="Ensembl"/>
</dbReference>
<dbReference type="InterPro" id="IPR040388">
    <property type="entry name" value="CXXC4/CXXC5"/>
</dbReference>
<dbReference type="InterPro" id="IPR002857">
    <property type="entry name" value="Znf_CXXC"/>
</dbReference>
<dbReference type="PANTHER" id="PTHR13419:SF2">
    <property type="entry name" value="CXXC-TYPE ZINC FINGER PROTEIN 5"/>
    <property type="match status" value="1"/>
</dbReference>
<dbReference type="PANTHER" id="PTHR13419">
    <property type="entry name" value="ZINC FINGER-CONTAINING"/>
    <property type="match status" value="1"/>
</dbReference>
<dbReference type="Pfam" id="PF02008">
    <property type="entry name" value="zf-CXXC"/>
    <property type="match status" value="1"/>
</dbReference>
<dbReference type="PROSITE" id="PS51058">
    <property type="entry name" value="ZF_CXXC"/>
    <property type="match status" value="1"/>
</dbReference>